<evidence type="ECO:0000255" key="1">
    <source>
        <dbReference type="HAMAP-Rule" id="MF_00358"/>
    </source>
</evidence>
<evidence type="ECO:0000305" key="2"/>
<comment type="similarity">
    <text evidence="1">Belongs to the bacterial ribosomal protein bS21 family.</text>
</comment>
<sequence length="71" mass="8345">MPIIKVRENEPFDVALRRFKRSCEKAGILADVRAREFYEKPTTARKRAKAAAVKRLAKKLSRENARRVRLY</sequence>
<accession>A8H151</accession>
<gene>
    <name evidence="1" type="primary">rpsU</name>
    <name type="ordered locus">Spea_0961</name>
</gene>
<organism>
    <name type="scientific">Shewanella pealeana (strain ATCC 700345 / ANG-SQ1)</name>
    <dbReference type="NCBI Taxonomy" id="398579"/>
    <lineage>
        <taxon>Bacteria</taxon>
        <taxon>Pseudomonadati</taxon>
        <taxon>Pseudomonadota</taxon>
        <taxon>Gammaproteobacteria</taxon>
        <taxon>Alteromonadales</taxon>
        <taxon>Shewanellaceae</taxon>
        <taxon>Shewanella</taxon>
    </lineage>
</organism>
<dbReference type="EMBL" id="CP000851">
    <property type="protein sequence ID" value="ABV86288.1"/>
    <property type="molecule type" value="Genomic_DNA"/>
</dbReference>
<dbReference type="RefSeq" id="WP_006080725.1">
    <property type="nucleotide sequence ID" value="NC_009901.1"/>
</dbReference>
<dbReference type="SMR" id="A8H151"/>
<dbReference type="STRING" id="398579.Spea_0961"/>
<dbReference type="GeneID" id="94729004"/>
<dbReference type="KEGG" id="spl:Spea_0961"/>
<dbReference type="eggNOG" id="COG0828">
    <property type="taxonomic scope" value="Bacteria"/>
</dbReference>
<dbReference type="HOGENOM" id="CLU_159258_1_0_6"/>
<dbReference type="OrthoDB" id="9799244at2"/>
<dbReference type="Proteomes" id="UP000002608">
    <property type="component" value="Chromosome"/>
</dbReference>
<dbReference type="GO" id="GO:1990904">
    <property type="term" value="C:ribonucleoprotein complex"/>
    <property type="evidence" value="ECO:0007669"/>
    <property type="project" value="UniProtKB-KW"/>
</dbReference>
<dbReference type="GO" id="GO:0005840">
    <property type="term" value="C:ribosome"/>
    <property type="evidence" value="ECO:0007669"/>
    <property type="project" value="UniProtKB-KW"/>
</dbReference>
<dbReference type="GO" id="GO:0003735">
    <property type="term" value="F:structural constituent of ribosome"/>
    <property type="evidence" value="ECO:0007669"/>
    <property type="project" value="InterPro"/>
</dbReference>
<dbReference type="GO" id="GO:0006412">
    <property type="term" value="P:translation"/>
    <property type="evidence" value="ECO:0007669"/>
    <property type="project" value="UniProtKB-UniRule"/>
</dbReference>
<dbReference type="Gene3D" id="1.20.5.1150">
    <property type="entry name" value="Ribosomal protein S8"/>
    <property type="match status" value="1"/>
</dbReference>
<dbReference type="HAMAP" id="MF_00358">
    <property type="entry name" value="Ribosomal_bS21"/>
    <property type="match status" value="1"/>
</dbReference>
<dbReference type="InterPro" id="IPR001911">
    <property type="entry name" value="Ribosomal_bS21"/>
</dbReference>
<dbReference type="InterPro" id="IPR018278">
    <property type="entry name" value="Ribosomal_bS21_CS"/>
</dbReference>
<dbReference type="InterPro" id="IPR038380">
    <property type="entry name" value="Ribosomal_bS21_sf"/>
</dbReference>
<dbReference type="NCBIfam" id="TIGR00030">
    <property type="entry name" value="S21p"/>
    <property type="match status" value="1"/>
</dbReference>
<dbReference type="PANTHER" id="PTHR21109">
    <property type="entry name" value="MITOCHONDRIAL 28S RIBOSOMAL PROTEIN S21"/>
    <property type="match status" value="1"/>
</dbReference>
<dbReference type="PANTHER" id="PTHR21109:SF22">
    <property type="entry name" value="SMALL RIBOSOMAL SUBUNIT PROTEIN BS21"/>
    <property type="match status" value="1"/>
</dbReference>
<dbReference type="Pfam" id="PF01165">
    <property type="entry name" value="Ribosomal_S21"/>
    <property type="match status" value="1"/>
</dbReference>
<dbReference type="PRINTS" id="PR00976">
    <property type="entry name" value="RIBOSOMALS21"/>
</dbReference>
<dbReference type="PROSITE" id="PS01181">
    <property type="entry name" value="RIBOSOMAL_S21"/>
    <property type="match status" value="1"/>
</dbReference>
<keyword id="KW-1185">Reference proteome</keyword>
<keyword id="KW-0687">Ribonucleoprotein</keyword>
<keyword id="KW-0689">Ribosomal protein</keyword>
<protein>
    <recommendedName>
        <fullName evidence="1">Small ribosomal subunit protein bS21</fullName>
    </recommendedName>
    <alternativeName>
        <fullName evidence="2">30S ribosomal protein S21</fullName>
    </alternativeName>
</protein>
<proteinExistence type="inferred from homology"/>
<name>RS21_SHEPA</name>
<feature type="chain" id="PRO_1000079421" description="Small ribosomal subunit protein bS21">
    <location>
        <begin position="1"/>
        <end position="71"/>
    </location>
</feature>
<reference key="1">
    <citation type="submission" date="2007-10" db="EMBL/GenBank/DDBJ databases">
        <title>Complete sequence of Shewanella pealeana ATCC 700345.</title>
        <authorList>
            <consortium name="US DOE Joint Genome Institute"/>
            <person name="Copeland A."/>
            <person name="Lucas S."/>
            <person name="Lapidus A."/>
            <person name="Barry K."/>
            <person name="Glavina del Rio T."/>
            <person name="Dalin E."/>
            <person name="Tice H."/>
            <person name="Pitluck S."/>
            <person name="Chertkov O."/>
            <person name="Brettin T."/>
            <person name="Bruce D."/>
            <person name="Detter J.C."/>
            <person name="Han C."/>
            <person name="Schmutz J."/>
            <person name="Larimer F."/>
            <person name="Land M."/>
            <person name="Hauser L."/>
            <person name="Kyrpides N."/>
            <person name="Kim E."/>
            <person name="Zhao J.-S.Z."/>
            <person name="Manno D."/>
            <person name="Hawari J."/>
            <person name="Richardson P."/>
        </authorList>
    </citation>
    <scope>NUCLEOTIDE SEQUENCE [LARGE SCALE GENOMIC DNA]</scope>
    <source>
        <strain>ATCC 700345 / ANG-SQ1</strain>
    </source>
</reference>